<reference key="1">
    <citation type="journal article" date="2006" name="Mol. Biol. Evol.">
        <title>The complete chloroplast genome sequence of Pelargonium x hortorum: organization and evolution of the largest and most highly rearranged chloroplast genome of land plants.</title>
        <authorList>
            <person name="Chumley T.W."/>
            <person name="Palmer J.D."/>
            <person name="Mower J.P."/>
            <person name="Fourcade H.M."/>
            <person name="Calie P.J."/>
            <person name="Boore J.L."/>
            <person name="Jansen R.K."/>
        </authorList>
    </citation>
    <scope>NUCLEOTIDE SEQUENCE [LARGE SCALE GENOMIC DNA]</scope>
    <source>
        <strain>cv. Ringo White</strain>
    </source>
</reference>
<proteinExistence type="inferred from homology"/>
<sequence length="37" mass="4056">MTTLNNLPSILVTLVGLVFPAFAMASLFLHVQKNKIL</sequence>
<comment type="function">
    <text evidence="1">May help in the organization of the PsaL subunit.</text>
</comment>
<comment type="subcellular location">
    <subcellularLocation>
        <location evidence="1">Plastid</location>
        <location evidence="1">Chloroplast thylakoid membrane</location>
        <topology evidence="1">Single-pass membrane protein</topology>
    </subcellularLocation>
</comment>
<comment type="similarity">
    <text evidence="1">Belongs to the PsaI family.</text>
</comment>
<dbReference type="EMBL" id="DQ897681">
    <property type="protein sequence ID" value="ABI17356.1"/>
    <property type="molecule type" value="Genomic_DNA"/>
</dbReference>
<dbReference type="EMBL" id="DQ897681">
    <property type="protein sequence ID" value="ABI17282.1"/>
    <property type="molecule type" value="Genomic_DNA"/>
</dbReference>
<dbReference type="RefSeq" id="YP_784091.1">
    <property type="nucleotide sequence ID" value="NC_008454.1"/>
</dbReference>
<dbReference type="RefSeq" id="YP_784165.1">
    <property type="nucleotide sequence ID" value="NC_008454.1"/>
</dbReference>
<dbReference type="SMR" id="Q06FL6"/>
<dbReference type="GeneID" id="4362762"/>
<dbReference type="GeneID" id="4362937"/>
<dbReference type="GO" id="GO:0009535">
    <property type="term" value="C:chloroplast thylakoid membrane"/>
    <property type="evidence" value="ECO:0007669"/>
    <property type="project" value="UniProtKB-SubCell"/>
</dbReference>
<dbReference type="GO" id="GO:0009522">
    <property type="term" value="C:photosystem I"/>
    <property type="evidence" value="ECO:0007669"/>
    <property type="project" value="UniProtKB-KW"/>
</dbReference>
<dbReference type="GO" id="GO:0015979">
    <property type="term" value="P:photosynthesis"/>
    <property type="evidence" value="ECO:0007669"/>
    <property type="project" value="UniProtKB-UniRule"/>
</dbReference>
<dbReference type="HAMAP" id="MF_00431">
    <property type="entry name" value="PSI_PsaI"/>
    <property type="match status" value="1"/>
</dbReference>
<dbReference type="InterPro" id="IPR001302">
    <property type="entry name" value="PSI_PsaI"/>
</dbReference>
<dbReference type="InterPro" id="IPR036357">
    <property type="entry name" value="PSI_PsaI_sf"/>
</dbReference>
<dbReference type="NCBIfam" id="TIGR03052">
    <property type="entry name" value="PS_I_psaI"/>
    <property type="match status" value="1"/>
</dbReference>
<dbReference type="PANTHER" id="PTHR35775">
    <property type="match status" value="1"/>
</dbReference>
<dbReference type="PANTHER" id="PTHR35775:SF2">
    <property type="entry name" value="PHOTOSYSTEM I REACTION CENTER SUBUNIT VIII"/>
    <property type="match status" value="1"/>
</dbReference>
<dbReference type="Pfam" id="PF00796">
    <property type="entry name" value="PSI_8"/>
    <property type="match status" value="1"/>
</dbReference>
<dbReference type="SUPFAM" id="SSF81540">
    <property type="entry name" value="Subunit VIII of photosystem I reaction centre, PsaI"/>
    <property type="match status" value="1"/>
</dbReference>
<feature type="chain" id="PRO_0000276032" description="Photosystem I reaction center subunit VIII">
    <location>
        <begin position="1"/>
        <end position="37"/>
    </location>
</feature>
<feature type="transmembrane region" description="Helical" evidence="1">
    <location>
        <begin position="9"/>
        <end position="29"/>
    </location>
</feature>
<evidence type="ECO:0000255" key="1">
    <source>
        <dbReference type="HAMAP-Rule" id="MF_00431"/>
    </source>
</evidence>
<name>PSAI_PELHO</name>
<geneLocation type="chloroplast"/>
<keyword id="KW-0150">Chloroplast</keyword>
<keyword id="KW-0472">Membrane</keyword>
<keyword id="KW-0602">Photosynthesis</keyword>
<keyword id="KW-0603">Photosystem I</keyword>
<keyword id="KW-0934">Plastid</keyword>
<keyword id="KW-0793">Thylakoid</keyword>
<keyword id="KW-0812">Transmembrane</keyword>
<keyword id="KW-1133">Transmembrane helix</keyword>
<gene>
    <name evidence="1" type="primary">psaI</name>
</gene>
<accession>Q06FL6</accession>
<protein>
    <recommendedName>
        <fullName evidence="1">Photosystem I reaction center subunit VIII</fullName>
        <shortName evidence="1">PSI-I</shortName>
    </recommendedName>
</protein>
<organism>
    <name type="scientific">Pelargonium hortorum</name>
    <name type="common">Common geranium</name>
    <name type="synonym">Pelargonium inquinans x Pelargonium zonale</name>
    <dbReference type="NCBI Taxonomy" id="4031"/>
    <lineage>
        <taxon>Eukaryota</taxon>
        <taxon>Viridiplantae</taxon>
        <taxon>Streptophyta</taxon>
        <taxon>Embryophyta</taxon>
        <taxon>Tracheophyta</taxon>
        <taxon>Spermatophyta</taxon>
        <taxon>Magnoliopsida</taxon>
        <taxon>eudicotyledons</taxon>
        <taxon>Gunneridae</taxon>
        <taxon>Pentapetalae</taxon>
        <taxon>rosids</taxon>
        <taxon>malvids</taxon>
        <taxon>Geraniales</taxon>
        <taxon>Geraniaceae</taxon>
        <taxon>Pelargonium</taxon>
    </lineage>
</organism>